<dbReference type="EC" id="2.7.1.20" evidence="3"/>
<dbReference type="EMBL" id="AY540996">
    <property type="protein sequence ID" value="AAT07065.1"/>
    <property type="molecule type" value="mRNA"/>
</dbReference>
<dbReference type="EMBL" id="AY540997">
    <property type="protein sequence ID" value="AAT07066.1"/>
    <property type="molecule type" value="mRNA"/>
</dbReference>
<dbReference type="EMBL" id="BC009659">
    <property type="protein sequence ID" value="AAH09659.1"/>
    <property type="molecule type" value="mRNA"/>
</dbReference>
<dbReference type="EMBL" id="U26589">
    <property type="protein sequence ID" value="AAA91649.1"/>
    <property type="status" value="ALT_INIT"/>
    <property type="molecule type" value="mRNA"/>
</dbReference>
<dbReference type="CCDS" id="CCDS26862.1">
    <molecule id="P55264-1"/>
</dbReference>
<dbReference type="CCDS" id="CCDS88589.1">
    <molecule id="P55264-2"/>
</dbReference>
<dbReference type="RefSeq" id="NP_001229970.1">
    <molecule id="P55264-2"/>
    <property type="nucleotide sequence ID" value="NM_001243041.1"/>
</dbReference>
<dbReference type="RefSeq" id="NP_598840.1">
    <molecule id="P55264-1"/>
    <property type="nucleotide sequence ID" value="NM_134079.4"/>
</dbReference>
<dbReference type="PDB" id="5KB5">
    <property type="method" value="X-ray"/>
    <property type="resolution" value="1.80 A"/>
    <property type="chains" value="A=20-361"/>
</dbReference>
<dbReference type="PDB" id="5KB6">
    <property type="method" value="X-ray"/>
    <property type="resolution" value="1.20 A"/>
    <property type="chains" value="A/B=1-361"/>
</dbReference>
<dbReference type="PDBsum" id="5KB5"/>
<dbReference type="PDBsum" id="5KB6"/>
<dbReference type="SMR" id="P55264"/>
<dbReference type="BioGRID" id="197988">
    <property type="interactions" value="2"/>
</dbReference>
<dbReference type="FunCoup" id="P55264">
    <property type="interactions" value="3687"/>
</dbReference>
<dbReference type="IntAct" id="P55264">
    <property type="interactions" value="2"/>
</dbReference>
<dbReference type="MINT" id="P55264"/>
<dbReference type="STRING" id="10090.ENSMUSP00000047665"/>
<dbReference type="GlyGen" id="P55264">
    <property type="glycosylation" value="1 site, 1 O-linked glycan (1 site)"/>
</dbReference>
<dbReference type="iPTMnet" id="P55264"/>
<dbReference type="PhosphoSitePlus" id="P55264"/>
<dbReference type="SwissPalm" id="P55264"/>
<dbReference type="REPRODUCTION-2DPAGE" id="P55264"/>
<dbReference type="jPOST" id="P55264"/>
<dbReference type="PaxDb" id="10090-ENSMUSP00000047665"/>
<dbReference type="PeptideAtlas" id="P55264"/>
<dbReference type="ProteomicsDB" id="296069">
    <molecule id="P55264-1"/>
</dbReference>
<dbReference type="ProteomicsDB" id="296070">
    <molecule id="P55264-2"/>
</dbReference>
<dbReference type="Pumba" id="P55264"/>
<dbReference type="Antibodypedia" id="29612">
    <property type="antibodies" value="456 antibodies from 37 providers"/>
</dbReference>
<dbReference type="DNASU" id="11534"/>
<dbReference type="Ensembl" id="ENSMUST00000045376.11">
    <molecule id="P55264-1"/>
    <property type="protein sequence ID" value="ENSMUSP00000047665.10"/>
    <property type="gene ID" value="ENSMUSG00000039197.11"/>
</dbReference>
<dbReference type="Ensembl" id="ENSMUST00000224069.2">
    <molecule id="P55264-2"/>
    <property type="protein sequence ID" value="ENSMUSP00000153089.2"/>
    <property type="gene ID" value="ENSMUSG00000039197.11"/>
</dbReference>
<dbReference type="GeneID" id="11534"/>
<dbReference type="KEGG" id="mmu:11534"/>
<dbReference type="UCSC" id="uc007sld.2">
    <molecule id="P55264-1"/>
    <property type="organism name" value="mouse"/>
</dbReference>
<dbReference type="UCSC" id="uc007sle.2">
    <molecule id="P55264-2"/>
    <property type="organism name" value="mouse"/>
</dbReference>
<dbReference type="AGR" id="MGI:87930"/>
<dbReference type="CTD" id="132"/>
<dbReference type="MGI" id="MGI:87930">
    <property type="gene designation" value="Adk"/>
</dbReference>
<dbReference type="VEuPathDB" id="HostDB:ENSMUSG00000039197"/>
<dbReference type="eggNOG" id="KOG2854">
    <property type="taxonomic scope" value="Eukaryota"/>
</dbReference>
<dbReference type="GeneTree" id="ENSGT00390000014320"/>
<dbReference type="HOGENOM" id="CLU_045832_0_0_1"/>
<dbReference type="InParanoid" id="P55264"/>
<dbReference type="OMA" id="YCATECI"/>
<dbReference type="OrthoDB" id="432447at2759"/>
<dbReference type="PhylomeDB" id="P55264"/>
<dbReference type="TreeFam" id="TF300745"/>
<dbReference type="BRENDA" id="2.7.1.20">
    <property type="organism ID" value="3474"/>
</dbReference>
<dbReference type="Reactome" id="R-MMU-74217">
    <property type="pathway name" value="Purine salvage"/>
</dbReference>
<dbReference type="Reactome" id="R-MMU-9755088">
    <property type="pathway name" value="Ribavirin ADME"/>
</dbReference>
<dbReference type="UniPathway" id="UPA00588">
    <property type="reaction ID" value="UER00659"/>
</dbReference>
<dbReference type="BioGRID-ORCS" id="11534">
    <property type="hits" value="2 hits in 81 CRISPR screens"/>
</dbReference>
<dbReference type="ChiTaRS" id="Adk">
    <property type="organism name" value="mouse"/>
</dbReference>
<dbReference type="PRO" id="PR:P55264"/>
<dbReference type="Proteomes" id="UP000000589">
    <property type="component" value="Chromosome 14"/>
</dbReference>
<dbReference type="RNAct" id="P55264">
    <property type="molecule type" value="protein"/>
</dbReference>
<dbReference type="Bgee" id="ENSMUSG00000039197">
    <property type="expression patterns" value="Expressed in left lobe of liver and 294 other cell types or tissues"/>
</dbReference>
<dbReference type="ExpressionAtlas" id="P55264">
    <property type="expression patterns" value="baseline and differential"/>
</dbReference>
<dbReference type="GO" id="GO:0005829">
    <property type="term" value="C:cytosol"/>
    <property type="evidence" value="ECO:0000314"/>
    <property type="project" value="MGI"/>
</dbReference>
<dbReference type="GO" id="GO:0005654">
    <property type="term" value="C:nucleoplasm"/>
    <property type="evidence" value="ECO:0007669"/>
    <property type="project" value="Ensembl"/>
</dbReference>
<dbReference type="GO" id="GO:0005634">
    <property type="term" value="C:nucleus"/>
    <property type="evidence" value="ECO:0000314"/>
    <property type="project" value="MGI"/>
</dbReference>
<dbReference type="GO" id="GO:0005886">
    <property type="term" value="C:plasma membrane"/>
    <property type="evidence" value="ECO:0007669"/>
    <property type="project" value="Ensembl"/>
</dbReference>
<dbReference type="GO" id="GO:0004001">
    <property type="term" value="F:adenosine kinase activity"/>
    <property type="evidence" value="ECO:0000314"/>
    <property type="project" value="MGI"/>
</dbReference>
<dbReference type="GO" id="GO:0005524">
    <property type="term" value="F:ATP binding"/>
    <property type="evidence" value="ECO:0007669"/>
    <property type="project" value="UniProtKB-KW"/>
</dbReference>
<dbReference type="GO" id="GO:0004136">
    <property type="term" value="F:deoxyadenosine kinase activity"/>
    <property type="evidence" value="ECO:0000315"/>
    <property type="project" value="MGI"/>
</dbReference>
<dbReference type="GO" id="GO:0046872">
    <property type="term" value="F:metal ion binding"/>
    <property type="evidence" value="ECO:0007669"/>
    <property type="project" value="UniProtKB-KW"/>
</dbReference>
<dbReference type="GO" id="GO:0044209">
    <property type="term" value="P:AMP salvage"/>
    <property type="evidence" value="ECO:0000314"/>
    <property type="project" value="MGI"/>
</dbReference>
<dbReference type="GO" id="GO:0106383">
    <property type="term" value="P:dAMP salvage"/>
    <property type="evidence" value="ECO:0000315"/>
    <property type="project" value="MGI"/>
</dbReference>
<dbReference type="GO" id="GO:0006175">
    <property type="term" value="P:dATP biosynthetic process"/>
    <property type="evidence" value="ECO:0000315"/>
    <property type="project" value="MGI"/>
</dbReference>
<dbReference type="GO" id="GO:0032263">
    <property type="term" value="P:GMP salvage"/>
    <property type="evidence" value="ECO:0000314"/>
    <property type="project" value="MGI"/>
</dbReference>
<dbReference type="GO" id="GO:0006166">
    <property type="term" value="P:purine ribonucleoside salvage"/>
    <property type="evidence" value="ECO:0000314"/>
    <property type="project" value="MGI"/>
</dbReference>
<dbReference type="CDD" id="cd01168">
    <property type="entry name" value="adenosine_kinase"/>
    <property type="match status" value="1"/>
</dbReference>
<dbReference type="FunFam" id="3.40.1190.20:FF:000175">
    <property type="entry name" value="Adenosine kinase"/>
    <property type="match status" value="1"/>
</dbReference>
<dbReference type="Gene3D" id="3.40.1190.20">
    <property type="match status" value="1"/>
</dbReference>
<dbReference type="InterPro" id="IPR001805">
    <property type="entry name" value="Adenokinase"/>
</dbReference>
<dbReference type="InterPro" id="IPR002173">
    <property type="entry name" value="Carboh/pur_kinase_PfkB_CS"/>
</dbReference>
<dbReference type="InterPro" id="IPR011611">
    <property type="entry name" value="PfkB_dom"/>
</dbReference>
<dbReference type="InterPro" id="IPR029056">
    <property type="entry name" value="Ribokinase-like"/>
</dbReference>
<dbReference type="PANTHER" id="PTHR45769">
    <property type="entry name" value="ADENOSINE KINASE"/>
    <property type="match status" value="1"/>
</dbReference>
<dbReference type="PANTHER" id="PTHR45769:SF3">
    <property type="entry name" value="ADENOSINE KINASE"/>
    <property type="match status" value="1"/>
</dbReference>
<dbReference type="Pfam" id="PF00294">
    <property type="entry name" value="PfkB"/>
    <property type="match status" value="1"/>
</dbReference>
<dbReference type="PRINTS" id="PR00989">
    <property type="entry name" value="ADENOKINASE"/>
</dbReference>
<dbReference type="SUPFAM" id="SSF53613">
    <property type="entry name" value="Ribokinase-like"/>
    <property type="match status" value="1"/>
</dbReference>
<dbReference type="PROSITE" id="PS00584">
    <property type="entry name" value="PFKB_KINASES_2"/>
    <property type="match status" value="1"/>
</dbReference>
<comment type="function">
    <text evidence="3">Catalyzes the phosphorylation of the purine nucleoside adenosine at the 5' position in an ATP-dependent manner. Serves as a potential regulator of concentrations of extracellular adenosine and intracellular adenine nucleotides.</text>
</comment>
<comment type="catalytic activity">
    <reaction evidence="3">
        <text>adenosine + ATP = AMP + ADP + H(+)</text>
        <dbReference type="Rhea" id="RHEA:20824"/>
        <dbReference type="ChEBI" id="CHEBI:15378"/>
        <dbReference type="ChEBI" id="CHEBI:16335"/>
        <dbReference type="ChEBI" id="CHEBI:30616"/>
        <dbReference type="ChEBI" id="CHEBI:456215"/>
        <dbReference type="ChEBI" id="CHEBI:456216"/>
        <dbReference type="EC" id="2.7.1.20"/>
    </reaction>
    <physiologicalReaction direction="left-to-right" evidence="3">
        <dbReference type="Rhea" id="RHEA:20825"/>
    </physiologicalReaction>
</comment>
<comment type="cofactor">
    <cofactor evidence="2">
        <name>Mg(2+)</name>
        <dbReference type="ChEBI" id="CHEBI:18420"/>
    </cofactor>
    <text evidence="2">Binds 3 Mg(2+) ions per subunit.</text>
</comment>
<comment type="activity regulation">
    <text evidence="2">Activity is inhibited by 5-iodotubercidin and 5'-amino-5'-deoxyadenosine.</text>
</comment>
<comment type="biophysicochemical properties">
    <molecule>Isoform 1</molecule>
    <kinetics>
        <KM evidence="3">20 nM for adenosine</KM>
        <Vmax evidence="3">16.0 nmol/min/ug enzyme with adenosine as substrat</Vmax>
    </kinetics>
</comment>
<comment type="biophysicochemical properties">
    <molecule>Isoform 2</molecule>
    <kinetics>
        <KM evidence="3">20 nM for adenosine</KM>
        <Vmax evidence="3">16.0 nmol/min/ug enzyme with adenosine as substrat</Vmax>
    </kinetics>
</comment>
<comment type="pathway">
    <text>Purine metabolism; AMP biosynthesis via salvage pathway; AMP from adenosine: step 1/1.</text>
</comment>
<comment type="subunit">
    <text evidence="1">Monomer.</text>
</comment>
<comment type="subcellular location">
    <molecule>Isoform 1</molecule>
    <subcellularLocation>
        <location evidence="2">Nucleus</location>
    </subcellularLocation>
</comment>
<comment type="subcellular location">
    <molecule>Isoform 2</molecule>
    <subcellularLocation>
        <location evidence="2">Cytoplasm</location>
    </subcellularLocation>
</comment>
<comment type="alternative products">
    <event type="alternative splicing"/>
    <isoform>
        <id>P55264-1</id>
        <name>1</name>
        <name evidence="4">AK-L</name>
        <name>Long</name>
        <sequence type="displayed"/>
    </isoform>
    <isoform>
        <id>P55264-2</id>
        <name>2</name>
        <name evidence="4">AK-S</name>
        <name>Short</name>
        <sequence type="described" ref="VSP_014756"/>
    </isoform>
</comment>
<comment type="tissue specificity">
    <text evidence="3">Widely expressed (PubMed:15317590). Highly expressed in liver, testis, kidney and spleen (at protein level). In brain, expression in most forebrain structures and the cerebellum is higher than in the midbrain and brainstem (at protein level) (PubMed:15317590).</text>
</comment>
<comment type="tissue specificity">
    <molecule>Isoform 1</molecule>
    <text evidence="3">Major isoform in testis and kidney. Not detected in most brain regions, except in the cerebellum, where it is expressed at a similar level to that of isoform 2 (at protein level).</text>
</comment>
<comment type="tissue specificity">
    <molecule>Isoform 2</molecule>
    <text evidence="3">Major isoform in spleen and in most brain regions, except in the cerebellum, where it is expressed at a similar level to that of isoform 1 (at protein level).</text>
</comment>
<comment type="similarity">
    <text evidence="5">Belongs to the carbohydrate kinase PfkB family.</text>
</comment>
<comment type="sequence caution" evidence="5">
    <conflict type="erroneous initiation">
        <sequence resource="EMBL-CDS" id="AAA91649"/>
    </conflict>
</comment>
<name>ADK_MOUSE</name>
<gene>
    <name type="primary">Adk</name>
</gene>
<keyword id="KW-0002">3D-structure</keyword>
<keyword id="KW-0025">Alternative splicing</keyword>
<keyword id="KW-0067">ATP-binding</keyword>
<keyword id="KW-0963">Cytoplasm</keyword>
<keyword id="KW-0418">Kinase</keyword>
<keyword id="KW-0460">Magnesium</keyword>
<keyword id="KW-0479">Metal-binding</keyword>
<keyword id="KW-0547">Nucleotide-binding</keyword>
<keyword id="KW-0539">Nucleus</keyword>
<keyword id="KW-0597">Phosphoprotein</keyword>
<keyword id="KW-0660">Purine salvage</keyword>
<keyword id="KW-1185">Reference proteome</keyword>
<keyword id="KW-0808">Transferase</keyword>
<protein>
    <recommendedName>
        <fullName>Adenosine kinase</fullName>
        <shortName>AK</shortName>
        <ecNumber evidence="3">2.7.1.20</ecNumber>
    </recommendedName>
    <alternativeName>
        <fullName>Adenosine 5'-phosphotransferase</fullName>
    </alternativeName>
</protein>
<proteinExistence type="evidence at protein level"/>
<feature type="chain" id="PRO_0000080054" description="Adenosine kinase">
    <location>
        <begin position="1"/>
        <end position="361"/>
    </location>
</feature>
<feature type="short sequence motif" description="Nuclear localization signal" evidence="2">
    <location>
        <begin position="7"/>
        <end position="15"/>
    </location>
</feature>
<feature type="active site" evidence="2">
    <location>
        <position position="316"/>
    </location>
</feature>
<feature type="active site" description="Proton acceptor" evidence="2">
    <location>
        <position position="316"/>
    </location>
</feature>
<feature type="binding site" evidence="2">
    <location>
        <position position="34"/>
    </location>
    <ligand>
        <name>adenosine</name>
        <dbReference type="ChEBI" id="CHEBI:16335"/>
    </ligand>
</feature>
<feature type="binding site" evidence="2">
    <location>
        <position position="48"/>
    </location>
    <ligand>
        <name>Mg(2+)</name>
        <dbReference type="ChEBI" id="CHEBI:18420"/>
        <label>1</label>
    </ligand>
</feature>
<feature type="binding site" evidence="2">
    <location>
        <position position="147"/>
    </location>
    <ligand>
        <name>Mg(2+)</name>
        <dbReference type="ChEBI" id="CHEBI:18420"/>
        <label>2</label>
    </ligand>
</feature>
<feature type="binding site" evidence="2">
    <location>
        <position position="305"/>
    </location>
    <ligand>
        <name>adenosine</name>
        <dbReference type="ChEBI" id="CHEBI:16335"/>
    </ligand>
</feature>
<feature type="modified residue" description="Phosphotyrosine" evidence="2">
    <location>
        <position position="76"/>
    </location>
</feature>
<feature type="splice variant" id="VSP_014756" description="In isoform 2." evidence="4">
    <original>MAAADEPKPKKLKVEAPQAL</original>
    <variation>MTST</variation>
    <location>
        <begin position="1"/>
        <end position="20"/>
    </location>
</feature>
<feature type="mutagenesis site" description="No effect on in vitro phosphorylation by PKC." evidence="3">
    <original>S</original>
    <variation>A</variation>
    <location>
        <position position="48"/>
    </location>
</feature>
<feature type="mutagenesis site" description="No effect on in vitro phosphorylation by PKC." evidence="3">
    <original>S</original>
    <variation>A</variation>
    <location>
        <position position="85"/>
    </location>
</feature>
<feature type="mutagenesis site" description="No effect on in vitro phosphorylation by PKC." evidence="3">
    <original>S</original>
    <variation>A</variation>
    <location>
        <position position="272"/>
    </location>
</feature>
<feature type="mutagenesis site" description="No effect on in vitro phosphorylation by PKC." evidence="3">
    <original>S</original>
    <variation>A</variation>
    <location>
        <position position="328"/>
    </location>
</feature>
<feature type="sequence conflict" description="In Ref. 3; AAA91649." evidence="5" ref="3">
    <original>L</original>
    <variation>M</variation>
    <location>
        <position position="92"/>
    </location>
</feature>
<feature type="sequence conflict" description="In Ref. 3; AAA91649." evidence="5" ref="3">
    <original>K</original>
    <variation>R</variation>
    <location>
        <position position="98"/>
    </location>
</feature>
<feature type="sequence conflict" description="In Ref. 3; AAA91649." evidence="5" ref="3">
    <original>R</original>
    <variation>S</variation>
    <location>
        <position position="117"/>
    </location>
</feature>
<feature type="sequence conflict" description="In Ref. 3; AAA91649." evidence="5" ref="3">
    <original>A</original>
    <variation>R</variation>
    <location>
        <position position="155"/>
    </location>
</feature>
<feature type="sequence conflict" description="In Ref. 3; AAA91649." evidence="5" ref="3">
    <original>R</original>
    <variation>N</variation>
    <location>
        <position position="170"/>
    </location>
</feature>
<feature type="sequence conflict" description="In Ref. 3; AAA91649." evidence="5" ref="3">
    <original>V</original>
    <variation>M</variation>
    <location>
        <position position="173"/>
    </location>
</feature>
<feature type="sequence conflict" description="In Ref. 3; AAA91649." evidence="5" ref="3">
    <original>V</original>
    <variation>T</variation>
    <location>
        <position position="208"/>
    </location>
</feature>
<feature type="sequence conflict" description="In Ref. 3; AAA91649." evidence="5" ref="3">
    <original>D</original>
    <variation>A</variation>
    <location>
        <position position="228"/>
    </location>
</feature>
<feature type="sequence conflict" description="In Ref. 1; AAT07066." evidence="5" ref="1">
    <original>D</original>
    <variation>G</variation>
    <location>
        <position position="256"/>
    </location>
</feature>
<feature type="sequence conflict" description="In Ref. 3; AAA91649." evidence="5" ref="3">
    <original>KKA</original>
    <variation>RKT</variation>
    <location>
        <begin position="262"/>
        <end position="264"/>
    </location>
</feature>
<feature type="sequence conflict" description="In Ref. 3; AAA91649." evidence="5" ref="3">
    <original>T</original>
    <variation>RN</variation>
    <location>
        <position position="281"/>
    </location>
</feature>
<feature type="sequence conflict" description="In Ref. 3; AAA91649." evidence="5" ref="3">
    <original>AE</original>
    <variation>TG</variation>
    <location>
        <begin position="291"/>
        <end position="292"/>
    </location>
</feature>
<feature type="sequence conflict" description="In Ref. 3; AAA91649." evidence="5" ref="3">
    <original>Q</original>
    <variation>E</variation>
    <location>
        <position position="303"/>
    </location>
</feature>
<feature type="sequence conflict" description="In Ref. 3; AAA91649." evidence="5" ref="3">
    <original>I</original>
    <variation>V</variation>
    <location>
        <position position="309"/>
    </location>
</feature>
<feature type="sequence conflict" description="In Ref. 1; AAT07066." evidence="5" ref="1">
    <original>A</original>
    <variation>V</variation>
    <location>
        <position position="314"/>
    </location>
</feature>
<feature type="sequence conflict" description="In Ref. 3; AAA91649." evidence="5" ref="3">
    <original>D</original>
    <variation>N</variation>
    <location>
        <position position="329"/>
    </location>
</feature>
<feature type="sequence conflict" description="In Ref. 3; AAA91649." evidence="5" ref="3">
    <original>D</original>
    <variation>N</variation>
    <location>
        <position position="359"/>
    </location>
</feature>
<feature type="strand" evidence="6">
    <location>
        <begin position="25"/>
        <end position="29"/>
    </location>
</feature>
<feature type="strand" evidence="6">
    <location>
        <begin position="32"/>
        <end position="38"/>
    </location>
</feature>
<feature type="helix" evidence="6">
    <location>
        <begin position="41"/>
        <end position="46"/>
    </location>
</feature>
<feature type="strand" evidence="6">
    <location>
        <begin position="54"/>
        <end position="56"/>
    </location>
</feature>
<feature type="helix" evidence="6">
    <location>
        <begin position="59"/>
        <end position="61"/>
    </location>
</feature>
<feature type="helix" evidence="6">
    <location>
        <begin position="64"/>
        <end position="71"/>
    </location>
</feature>
<feature type="strand" evidence="6">
    <location>
        <begin position="75"/>
        <end position="80"/>
    </location>
</feature>
<feature type="helix" evidence="6">
    <location>
        <begin position="81"/>
        <end position="93"/>
    </location>
</feature>
<feature type="strand" evidence="6">
    <location>
        <begin position="100"/>
        <end position="109"/>
    </location>
</feature>
<feature type="helix" evidence="6">
    <location>
        <begin position="110"/>
        <end position="121"/>
    </location>
</feature>
<feature type="strand" evidence="6">
    <location>
        <begin position="125"/>
        <end position="134"/>
    </location>
</feature>
<feature type="strand" evidence="6">
    <location>
        <begin position="138"/>
        <end position="144"/>
    </location>
</feature>
<feature type="strand" evidence="6">
    <location>
        <begin position="147"/>
        <end position="153"/>
    </location>
</feature>
<feature type="helix" evidence="6">
    <location>
        <begin position="155"/>
        <end position="159"/>
    </location>
</feature>
<feature type="helix" evidence="6">
    <location>
        <begin position="162"/>
        <end position="164"/>
    </location>
</feature>
<feature type="turn" evidence="6">
    <location>
        <begin position="165"/>
        <end position="167"/>
    </location>
</feature>
<feature type="helix" evidence="6">
    <location>
        <begin position="169"/>
        <end position="176"/>
    </location>
</feature>
<feature type="strand" evidence="6">
    <location>
        <begin position="179"/>
        <end position="184"/>
    </location>
</feature>
<feature type="helix" evidence="6">
    <location>
        <begin position="185"/>
        <end position="189"/>
    </location>
</feature>
<feature type="helix" evidence="6">
    <location>
        <begin position="192"/>
        <end position="204"/>
    </location>
</feature>
<feature type="strand" evidence="6">
    <location>
        <begin position="208"/>
        <end position="212"/>
    </location>
</feature>
<feature type="helix" evidence="6">
    <location>
        <begin position="216"/>
        <end position="221"/>
    </location>
</feature>
<feature type="helix" evidence="6">
    <location>
        <begin position="223"/>
        <end position="229"/>
    </location>
</feature>
<feature type="helix" evidence="6">
    <location>
        <begin position="230"/>
        <end position="232"/>
    </location>
</feature>
<feature type="strand" evidence="6">
    <location>
        <begin position="234"/>
        <end position="239"/>
    </location>
</feature>
<feature type="helix" evidence="6">
    <location>
        <begin position="240"/>
        <end position="249"/>
    </location>
</feature>
<feature type="helix" evidence="6">
    <location>
        <begin position="257"/>
        <end position="265"/>
    </location>
</feature>
<feature type="strand" evidence="6">
    <location>
        <begin position="277"/>
        <end position="282"/>
    </location>
</feature>
<feature type="strand" evidence="6">
    <location>
        <begin position="285"/>
        <end position="290"/>
    </location>
</feature>
<feature type="strand" evidence="6">
    <location>
        <begin position="295"/>
        <end position="298"/>
    </location>
</feature>
<feature type="helix" evidence="6">
    <location>
        <begin position="305"/>
        <end position="307"/>
    </location>
</feature>
<feature type="helix" evidence="6">
    <location>
        <begin position="314"/>
        <end position="326"/>
    </location>
</feature>
<feature type="turn" evidence="6">
    <location>
        <begin position="327"/>
        <end position="329"/>
    </location>
</feature>
<feature type="helix" evidence="6">
    <location>
        <begin position="332"/>
        <end position="346"/>
    </location>
</feature>
<feature type="strand" evidence="6">
    <location>
        <begin position="349"/>
        <end position="352"/>
    </location>
</feature>
<organism>
    <name type="scientific">Mus musculus</name>
    <name type="common">Mouse</name>
    <dbReference type="NCBI Taxonomy" id="10090"/>
    <lineage>
        <taxon>Eukaryota</taxon>
        <taxon>Metazoa</taxon>
        <taxon>Chordata</taxon>
        <taxon>Craniata</taxon>
        <taxon>Vertebrata</taxon>
        <taxon>Euteleostomi</taxon>
        <taxon>Mammalia</taxon>
        <taxon>Eutheria</taxon>
        <taxon>Euarchontoglires</taxon>
        <taxon>Glires</taxon>
        <taxon>Rodentia</taxon>
        <taxon>Myomorpha</taxon>
        <taxon>Muroidea</taxon>
        <taxon>Muridae</taxon>
        <taxon>Murinae</taxon>
        <taxon>Mus</taxon>
        <taxon>Mus</taxon>
    </lineage>
</organism>
<reference key="1">
    <citation type="journal article" date="2004" name="Eur. J. Biochem.">
        <title>Molecular characterization of recombinant mouse adenosine kinase and evaluation as a target for protein phosphorylation.</title>
        <authorList>
            <person name="Sahin B."/>
            <person name="Kansy J.W."/>
            <person name="Nairn A.C."/>
            <person name="Spychala J."/>
            <person name="Ealick S.E."/>
            <person name="Fienberg A.A."/>
            <person name="Greene R.W."/>
            <person name="Bibb J.A."/>
        </authorList>
    </citation>
    <scope>NUCLEOTIDE SEQUENCE [MRNA] (ISOFORMS 1 AND 2)</scope>
    <scope>CATALYTIC ACTIVITY</scope>
    <scope>BIOPHYSICOCHEMICAL PROPERTIES</scope>
    <scope>TISSUE SPECIFICITY</scope>
    <scope>MUTAGENESIS OF SER-48; SER-85; SER-272 AND SER-328</scope>
    <source>
        <tissue>Brain</tissue>
    </source>
</reference>
<reference key="2">
    <citation type="journal article" date="2004" name="Genome Res.">
        <title>The status, quality, and expansion of the NIH full-length cDNA project: the Mammalian Gene Collection (MGC).</title>
        <authorList>
            <consortium name="The MGC Project Team"/>
        </authorList>
    </citation>
    <scope>NUCLEOTIDE SEQUENCE [LARGE SCALE MRNA] (ISOFORM 1)</scope>
    <source>
        <strain>FVB/N</strain>
        <tissue>Mammary tumor</tissue>
    </source>
</reference>
<reference key="3">
    <citation type="journal article" date="1996" name="Eur. J. Biochem.">
        <title>Cloning and characterization of cDNA for adenosine kinase from mammalian (Chinese hamster, mouse, human and rat) species. High frequency mutants of Chinese hamster ovary cells involve structural alterations in the gene.</title>
        <authorList>
            <person name="Singh B."/>
            <person name="Hao W."/>
            <person name="Wu Z.-C."/>
            <person name="Eigl B."/>
            <person name="Gupta R.S."/>
        </authorList>
    </citation>
    <scope>NUCLEOTIDE SEQUENCE [MRNA] OF 84-361</scope>
</reference>
<reference key="4">
    <citation type="journal article" date="2010" name="Cell">
        <title>A tissue-specific atlas of mouse protein phosphorylation and expression.</title>
        <authorList>
            <person name="Huttlin E.L."/>
            <person name="Jedrychowski M.P."/>
            <person name="Elias J.E."/>
            <person name="Goswami T."/>
            <person name="Rad R."/>
            <person name="Beausoleil S.A."/>
            <person name="Villen J."/>
            <person name="Haas W."/>
            <person name="Sowa M.E."/>
            <person name="Gygi S.P."/>
        </authorList>
    </citation>
    <scope>IDENTIFICATION BY MASS SPECTROMETRY [LARGE SCALE ANALYSIS]</scope>
    <source>
        <tissue>Brain</tissue>
        <tissue>Brown adipose tissue</tissue>
        <tissue>Heart</tissue>
        <tissue>Kidney</tissue>
        <tissue>Liver</tissue>
        <tissue>Lung</tissue>
        <tissue>Pancreas</tissue>
        <tissue>Spleen</tissue>
        <tissue>Testis</tissue>
    </source>
</reference>
<evidence type="ECO:0000250" key="1"/>
<evidence type="ECO:0000250" key="2">
    <source>
        <dbReference type="UniProtKB" id="P55263"/>
    </source>
</evidence>
<evidence type="ECO:0000269" key="3">
    <source>
    </source>
</evidence>
<evidence type="ECO:0000303" key="4">
    <source>
    </source>
</evidence>
<evidence type="ECO:0000305" key="5"/>
<evidence type="ECO:0007829" key="6">
    <source>
        <dbReference type="PDB" id="5KB6"/>
    </source>
</evidence>
<accession>P55264</accession>
<accession>Q6JAM3</accession>
<accession>Q91VJ3</accession>
<sequence>MAAADEPKPKKLKVEAPQALSENVLFGMGNPLLDISAVVDKDFLDKYSLKPNDQILAEDKHKELFDELVKKFKVEYHAGGSTQNSMKVAQWLIQEPHKAATFFGCIGIDKFGEILKRKAADAHVDAHYYEQNEQPTGTCAACITGGNRSLVANLAAANCYKKEKHLDLERNWVLVEKARVYYIAGFFLTVSPESVLKVARYAAENNRVFTLNLSAPFISQFFKEALMDVMPYVDILFGNETEAATFAREQGFETKDIKEIAKKAQALPKVNSKRQRTVIFTQGRDDTIVAAENDVTAFPVLDQNQEEIIDTNGAGDAFVGGFLSQLVSDKPLTECIRAGHYAASVIIRRTGCTFPEKPDFH</sequence>